<dbReference type="EC" id="2.4.1.298"/>
<dbReference type="EMBL" id="AB013598">
    <property type="protein sequence ID" value="BAA36423.1"/>
    <property type="molecule type" value="mRNA"/>
</dbReference>
<dbReference type="SMR" id="Q9ZR25"/>
<dbReference type="CAZy" id="GT1">
    <property type="family name" value="Glycosyltransferase Family 1"/>
</dbReference>
<dbReference type="KEGG" id="ag:BAA36423"/>
<dbReference type="BRENDA" id="2.4.1.298">
    <property type="organism ID" value="6615"/>
</dbReference>
<dbReference type="UniPathway" id="UPA00009"/>
<dbReference type="GO" id="GO:0080043">
    <property type="term" value="F:quercetin 3-O-glucosyltransferase activity"/>
    <property type="evidence" value="ECO:0007669"/>
    <property type="project" value="TreeGrafter"/>
</dbReference>
<dbReference type="GO" id="GO:0080044">
    <property type="term" value="F:quercetin 7-O-glucosyltransferase activity"/>
    <property type="evidence" value="ECO:0007669"/>
    <property type="project" value="TreeGrafter"/>
</dbReference>
<dbReference type="GO" id="GO:0102816">
    <property type="term" value="F:UDP-D-glucose:delphinidin 3-O-glucosyl-5-O-caffeoylglucoside -O-beta-D-glucosyltransferase activity"/>
    <property type="evidence" value="ECO:0007669"/>
    <property type="project" value="UniProtKB-EC"/>
</dbReference>
<dbReference type="GO" id="GO:0009718">
    <property type="term" value="P:anthocyanin-containing compound biosynthetic process"/>
    <property type="evidence" value="ECO:0007669"/>
    <property type="project" value="UniProtKB-UniPathway"/>
</dbReference>
<dbReference type="CDD" id="cd03784">
    <property type="entry name" value="GT1_Gtf-like"/>
    <property type="match status" value="1"/>
</dbReference>
<dbReference type="FunFam" id="3.40.50.2000:FF:000019">
    <property type="entry name" value="Glycosyltransferase"/>
    <property type="match status" value="1"/>
</dbReference>
<dbReference type="Gene3D" id="3.40.50.2000">
    <property type="entry name" value="Glycogen Phosphorylase B"/>
    <property type="match status" value="2"/>
</dbReference>
<dbReference type="InterPro" id="IPR002213">
    <property type="entry name" value="UDP_glucos_trans"/>
</dbReference>
<dbReference type="InterPro" id="IPR035595">
    <property type="entry name" value="UDP_glycos_trans_CS"/>
</dbReference>
<dbReference type="PANTHER" id="PTHR11926">
    <property type="entry name" value="GLUCOSYL/GLUCURONOSYL TRANSFERASES"/>
    <property type="match status" value="1"/>
</dbReference>
<dbReference type="PANTHER" id="PTHR11926:SF870">
    <property type="entry name" value="UDP-GLYCOSYLTRANSFERASE 75B1"/>
    <property type="match status" value="1"/>
</dbReference>
<dbReference type="Pfam" id="PF00201">
    <property type="entry name" value="UDPGT"/>
    <property type="match status" value="1"/>
</dbReference>
<dbReference type="SUPFAM" id="SSF53756">
    <property type="entry name" value="UDP-Glycosyltransferase/glycogen phosphorylase"/>
    <property type="match status" value="1"/>
</dbReference>
<dbReference type="PROSITE" id="PS00375">
    <property type="entry name" value="UDPGT"/>
    <property type="match status" value="1"/>
</dbReference>
<accession>Q9ZR25</accession>
<feature type="signal peptide" evidence="3">
    <location>
        <begin position="1"/>
        <end position="15"/>
    </location>
</feature>
<feature type="chain" id="PRO_0000422566" description="Anthocyanidin 3-O-glucoside 5-O-glucosyltransferase">
    <location>
        <begin position="16"/>
        <end position="461"/>
    </location>
</feature>
<feature type="active site" description="Proton acceptor" evidence="1">
    <location>
        <position position="16"/>
    </location>
</feature>
<feature type="binding site" evidence="2">
    <location>
        <position position="16"/>
    </location>
    <ligand>
        <name>an anthocyanidin</name>
        <dbReference type="ChEBI" id="CHEBI:143576"/>
    </ligand>
</feature>
<feature type="binding site" evidence="1">
    <location>
        <position position="338"/>
    </location>
    <ligand>
        <name>UDP-alpha-D-glucose</name>
        <dbReference type="ChEBI" id="CHEBI:58885"/>
    </ligand>
</feature>
<feature type="binding site" evidence="1">
    <location>
        <position position="353"/>
    </location>
    <ligand>
        <name>UDP-alpha-D-glucose</name>
        <dbReference type="ChEBI" id="CHEBI:58885"/>
    </ligand>
</feature>
<feature type="binding site" evidence="1">
    <location>
        <position position="356"/>
    </location>
    <ligand>
        <name>UDP-alpha-D-glucose</name>
        <dbReference type="ChEBI" id="CHEBI:58885"/>
    </ligand>
</feature>
<feature type="binding site" evidence="1">
    <location>
        <position position="357"/>
    </location>
    <ligand>
        <name>UDP-alpha-D-glucose</name>
        <dbReference type="ChEBI" id="CHEBI:58885"/>
    </ligand>
</feature>
<feature type="binding site" evidence="1">
    <location>
        <position position="358"/>
    </location>
    <ligand>
        <name>UDP-alpha-D-glucose</name>
        <dbReference type="ChEBI" id="CHEBI:58885"/>
    </ligand>
</feature>
<feature type="binding site" evidence="1">
    <location>
        <position position="361"/>
    </location>
    <ligand>
        <name>UDP-alpha-D-glucose</name>
        <dbReference type="ChEBI" id="CHEBI:58885"/>
    </ligand>
</feature>
<feature type="binding site" evidence="1">
    <location>
        <position position="377"/>
    </location>
    <ligand>
        <name>UDP-alpha-D-glucose</name>
        <dbReference type="ChEBI" id="CHEBI:58885"/>
    </ligand>
</feature>
<feature type="binding site" evidence="1">
    <location>
        <position position="378"/>
    </location>
    <ligand>
        <name>UDP-alpha-D-glucose</name>
        <dbReference type="ChEBI" id="CHEBI:58885"/>
    </ligand>
</feature>
<reference key="1">
    <citation type="journal article" date="1999" name="J. Biol. Chem.">
        <title>Molecular cloning and biochemical characterization of a novel anthocyanin 5-O-glucosyltransferase by mRNA differential display for plant forms regarding anthocyanin.</title>
        <authorList>
            <person name="Yamazaki M."/>
            <person name="Gong Z."/>
            <person name="Fukuchi-Mizutani M."/>
            <person name="Fukui Y."/>
            <person name="Tanaka Y."/>
            <person name="Kusumi T."/>
            <person name="Saito K."/>
        </authorList>
    </citation>
    <scope>NUCLEOTIDE SEQUENCE [MRNA]</scope>
    <scope>FUNCTION</scope>
    <source>
        <tissue>Petal</tissue>
    </source>
</reference>
<evidence type="ECO:0000250" key="1">
    <source>
        <dbReference type="UniProtKB" id="A0A0A1HA03"/>
    </source>
</evidence>
<evidence type="ECO:0000250" key="2">
    <source>
        <dbReference type="UniProtKB" id="P51094"/>
    </source>
</evidence>
<evidence type="ECO:0000255" key="3"/>
<evidence type="ECO:0000269" key="4">
    <source>
    </source>
</evidence>
<evidence type="ECO:0000305" key="5"/>
<gene>
    <name type="primary">HGT8</name>
</gene>
<sequence>MSRAHVLLATFPAQGHINPALQFAKRLANADIQVTFFTSVYAWRRMSRTAAGSNGLINFVSFSDGYDDGLQPGDDGKNYMSEMKSRGIKALSDTLAANNVDQKSSKITFVVYSHLFAWAAKVAREFHLRSALLWIEPATVLDIFYFYFNGYSDEIDAGSDAIHLPGGLPVLAQRDLPSFLLPSTHERFRSLMKEKLETLEGEEKPKVLVNSFDALEPDALKAIDKYEMIAIGPLIPSAFLDGKDPSDRSFGGDLFEKGSNDDDCLEWLSTNPRSSVVYVSFGSFVNTTKSQMEEIARGLLDCGRPFLWVVRVNEGEEVLISCMEELKRVGKIVSWCSQLEVLTHPSLGCFVTHCGWNSTLESISFGVPMVAFPQWFDQGTNAKLMEDVWRTGVRVRANEEGSVVDGDEIRRCIEEVMDGGEKSRKLRESAGKWKDLARKAMEEDGSSVNNLKVFLDEVVGI</sequence>
<proteinExistence type="evidence at transcript level"/>
<protein>
    <recommendedName>
        <fullName>Anthocyanidin 3-O-glucoside 5-O-glucosyltransferase</fullName>
        <ecNumber>2.4.1.298</ecNumber>
    </recommendedName>
    <alternativeName>
        <fullName>UDP-glucose:anthocyanin 5-O-glucosyltransferase HGT8</fullName>
    </alternativeName>
</protein>
<keyword id="KW-0328">Glycosyltransferase</keyword>
<keyword id="KW-0732">Signal</keyword>
<keyword id="KW-0808">Transferase</keyword>
<comment type="function">
    <text evidence="4">Catalyzes the glucosylation at the O-5 position of anthocyanidin 3-glucosides to form anthocyanidin 3,5-di-O-glucosides using UDP-glucose as sugar donor. Anthocyanidin 3,5-di-O-glucosides are molecules that are responsible for pigmentation. Also acts on anthocyanidin 3-O-(6-O-malonylglucoside). Much less active with hydroxycinnamoylglucose derivatives. No activity in the absence of the 3-O-glucoside group.</text>
</comment>
<comment type="catalytic activity">
    <reaction>
        <text>an anthocyanidin 3-O-beta-D-glucoside + UDP-alpha-D-glucose = an anthocyanidin 3,5-di-O-beta-D-glucoside + UDP + 2 H(+)</text>
        <dbReference type="Rhea" id="RHEA:35423"/>
        <dbReference type="ChEBI" id="CHEBI:15378"/>
        <dbReference type="ChEBI" id="CHEBI:16307"/>
        <dbReference type="ChEBI" id="CHEBI:57503"/>
        <dbReference type="ChEBI" id="CHEBI:58223"/>
        <dbReference type="ChEBI" id="CHEBI:58885"/>
        <dbReference type="EC" id="2.4.1.298"/>
    </reaction>
</comment>
<comment type="pathway">
    <text>Pigment biosynthesis; anthocyanin biosynthesis.</text>
</comment>
<comment type="similarity">
    <text evidence="5">Belongs to the UDP-glycosyltransferase family.</text>
</comment>
<name>5GT_VERHY</name>
<organism>
    <name type="scientific">Verbena hybrida</name>
    <name type="common">Garden vervain</name>
    <name type="synonym">Verbena hortensis</name>
    <dbReference type="NCBI Taxonomy" id="76714"/>
    <lineage>
        <taxon>Eukaryota</taxon>
        <taxon>Viridiplantae</taxon>
        <taxon>Streptophyta</taxon>
        <taxon>Embryophyta</taxon>
        <taxon>Tracheophyta</taxon>
        <taxon>Spermatophyta</taxon>
        <taxon>Magnoliopsida</taxon>
        <taxon>eudicotyledons</taxon>
        <taxon>Gunneridae</taxon>
        <taxon>Pentapetalae</taxon>
        <taxon>asterids</taxon>
        <taxon>lamiids</taxon>
        <taxon>Lamiales</taxon>
        <taxon>Verbenaceae</taxon>
        <taxon>Verbeneae</taxon>
        <taxon>Glandularia</taxon>
    </lineage>
</organism>